<gene>
    <name type="ORF">DDB_G0279427</name>
</gene>
<protein>
    <recommendedName>
        <fullName evidence="5">Sestrin homolog</fullName>
    </recommendedName>
</protein>
<dbReference type="EMBL" id="AAFI02000031">
    <property type="protein sequence ID" value="EAL67652.1"/>
    <property type="molecule type" value="Genomic_DNA"/>
</dbReference>
<dbReference type="RefSeq" id="XP_641621.1">
    <property type="nucleotide sequence ID" value="XM_636529.1"/>
</dbReference>
<dbReference type="SMR" id="Q54WU6"/>
<dbReference type="FunCoup" id="Q54WU6">
    <property type="interactions" value="101"/>
</dbReference>
<dbReference type="STRING" id="44689.Q54WU6"/>
<dbReference type="GlyGen" id="Q54WU6">
    <property type="glycosylation" value="8 sites"/>
</dbReference>
<dbReference type="PaxDb" id="44689-DDB0232929"/>
<dbReference type="EnsemblProtists" id="EAL67652">
    <property type="protein sequence ID" value="EAL67652"/>
    <property type="gene ID" value="DDB_G0279427"/>
</dbReference>
<dbReference type="GeneID" id="8622027"/>
<dbReference type="KEGG" id="ddi:DDB_G0279427"/>
<dbReference type="dictyBase" id="DDB_G0279427">
    <property type="gene designation" value="sesn"/>
</dbReference>
<dbReference type="VEuPathDB" id="AmoebaDB:DDB_G0279427"/>
<dbReference type="eggNOG" id="KOG3746">
    <property type="taxonomic scope" value="Eukaryota"/>
</dbReference>
<dbReference type="HOGENOM" id="CLU_020429_2_1_1"/>
<dbReference type="InParanoid" id="Q54WU6"/>
<dbReference type="OMA" id="HAIIVLC"/>
<dbReference type="PhylomeDB" id="Q54WU6"/>
<dbReference type="Reactome" id="R-DDI-5628897">
    <property type="pathway name" value="TP53 Regulates Metabolic Genes"/>
</dbReference>
<dbReference type="Reactome" id="R-DDI-9639288">
    <property type="pathway name" value="Amino acids regulate mTORC1"/>
</dbReference>
<dbReference type="Reactome" id="R-DDI-9755511">
    <property type="pathway name" value="KEAP1-NFE2L2 pathway"/>
</dbReference>
<dbReference type="PRO" id="PR:Q54WU6"/>
<dbReference type="Proteomes" id="UP000002195">
    <property type="component" value="Chromosome 3"/>
</dbReference>
<dbReference type="GO" id="GO:0005829">
    <property type="term" value="C:cytosol"/>
    <property type="evidence" value="ECO:0000314"/>
    <property type="project" value="dictyBase"/>
</dbReference>
<dbReference type="GO" id="GO:0005634">
    <property type="term" value="C:nucleus"/>
    <property type="evidence" value="ECO:0007669"/>
    <property type="project" value="UniProtKB-SubCell"/>
</dbReference>
<dbReference type="GO" id="GO:0070728">
    <property type="term" value="F:L-leucine binding"/>
    <property type="evidence" value="ECO:0000318"/>
    <property type="project" value="GO_Central"/>
</dbReference>
<dbReference type="GO" id="GO:0016684">
    <property type="term" value="F:oxidoreductase activity, acting on peroxide as acceptor"/>
    <property type="evidence" value="ECO:0000318"/>
    <property type="project" value="GO_Central"/>
</dbReference>
<dbReference type="GO" id="GO:1904630">
    <property type="term" value="P:cellular response to diterpene"/>
    <property type="evidence" value="ECO:0000315"/>
    <property type="project" value="dictyBase"/>
</dbReference>
<dbReference type="GO" id="GO:0071233">
    <property type="term" value="P:cellular response to L-leucine"/>
    <property type="evidence" value="ECO:0000318"/>
    <property type="project" value="GO_Central"/>
</dbReference>
<dbReference type="GO" id="GO:1990253">
    <property type="term" value="P:cellular response to leucine starvation"/>
    <property type="evidence" value="ECO:0000318"/>
    <property type="project" value="GO_Central"/>
</dbReference>
<dbReference type="GO" id="GO:0010629">
    <property type="term" value="P:negative regulation of gene expression"/>
    <property type="evidence" value="ECO:0000315"/>
    <property type="project" value="dictyBase"/>
</dbReference>
<dbReference type="GO" id="GO:0032007">
    <property type="term" value="P:negative regulation of TOR signaling"/>
    <property type="evidence" value="ECO:0000315"/>
    <property type="project" value="dictyBase"/>
</dbReference>
<dbReference type="GO" id="GO:1904262">
    <property type="term" value="P:negative regulation of TORC1 signaling"/>
    <property type="evidence" value="ECO:0000318"/>
    <property type="project" value="GO_Central"/>
</dbReference>
<dbReference type="GO" id="GO:0016239">
    <property type="term" value="P:positive regulation of macroautophagy"/>
    <property type="evidence" value="ECO:0000315"/>
    <property type="project" value="dictyBase"/>
</dbReference>
<dbReference type="GO" id="GO:1901031">
    <property type="term" value="P:regulation of response to reactive oxygen species"/>
    <property type="evidence" value="ECO:0000315"/>
    <property type="project" value="dictyBase"/>
</dbReference>
<dbReference type="Gene3D" id="1.20.1290.10">
    <property type="entry name" value="AhpD-like"/>
    <property type="match status" value="1"/>
</dbReference>
<dbReference type="InterPro" id="IPR029032">
    <property type="entry name" value="AhpD-like"/>
</dbReference>
<dbReference type="InterPro" id="IPR006730">
    <property type="entry name" value="Sestrin"/>
</dbReference>
<dbReference type="PANTHER" id="PTHR12474">
    <property type="entry name" value="P53 REGULATED PA26 NUCLEAR PROTEIN SESTRIN"/>
    <property type="match status" value="1"/>
</dbReference>
<dbReference type="PANTHER" id="PTHR12474:SF0">
    <property type="entry name" value="SESTRIN HOMOLOG"/>
    <property type="match status" value="1"/>
</dbReference>
<dbReference type="Pfam" id="PF04636">
    <property type="entry name" value="PA26"/>
    <property type="match status" value="1"/>
</dbReference>
<dbReference type="SUPFAM" id="SSF69118">
    <property type="entry name" value="AhpD-like"/>
    <property type="match status" value="1"/>
</dbReference>
<feature type="chain" id="PRO_0000356842" description="Sestrin homolog">
    <location>
        <begin position="1"/>
        <end position="601"/>
    </location>
</feature>
<feature type="region of interest" description="Disordered" evidence="4">
    <location>
        <begin position="1"/>
        <end position="58"/>
    </location>
</feature>
<feature type="region of interest" description="Disordered" evidence="4">
    <location>
        <begin position="355"/>
        <end position="425"/>
    </location>
</feature>
<feature type="compositionally biased region" description="Polar residues" evidence="4">
    <location>
        <begin position="1"/>
        <end position="11"/>
    </location>
</feature>
<feature type="compositionally biased region" description="Low complexity" evidence="4">
    <location>
        <begin position="21"/>
        <end position="32"/>
    </location>
</feature>
<feature type="compositionally biased region" description="Basic and acidic residues" evidence="4">
    <location>
        <begin position="368"/>
        <end position="379"/>
    </location>
</feature>
<feature type="compositionally biased region" description="Low complexity" evidence="4">
    <location>
        <begin position="380"/>
        <end position="425"/>
    </location>
</feature>
<feature type="glycosylation site" description="N-linked (GlcNAc...) asparagine" evidence="3">
    <location>
        <position position="20"/>
    </location>
</feature>
<feature type="glycosylation site" description="N-linked (GlcNAc...) asparagine" evidence="3">
    <location>
        <position position="322"/>
    </location>
</feature>
<feature type="glycosylation site" description="N-linked (GlcNAc...) asparagine" evidence="3">
    <location>
        <position position="330"/>
    </location>
</feature>
<feature type="glycosylation site" description="N-linked (GlcNAc...) asparagine" evidence="3">
    <location>
        <position position="387"/>
    </location>
</feature>
<feature type="glycosylation site" description="N-linked (GlcNAc...) asparagine" evidence="3">
    <location>
        <position position="388"/>
    </location>
</feature>
<feature type="glycosylation site" description="N-linked (GlcNAc...) asparagine" evidence="3">
    <location>
        <position position="406"/>
    </location>
</feature>
<feature type="glycosylation site" description="N-linked (GlcNAc...) asparagine" evidence="3">
    <location>
        <position position="438"/>
    </location>
</feature>
<feature type="glycosylation site" description="N-linked (GlcNAc...) asparagine" evidence="3">
    <location>
        <position position="499"/>
    </location>
</feature>
<evidence type="ECO:0000250" key="1">
    <source>
        <dbReference type="UniProtKB" id="Q9W1K5"/>
    </source>
</evidence>
<evidence type="ECO:0000250" key="2">
    <source>
        <dbReference type="UniProtKB" id="Q9Y6P5"/>
    </source>
</evidence>
<evidence type="ECO:0000255" key="3"/>
<evidence type="ECO:0000256" key="4">
    <source>
        <dbReference type="SAM" id="MobiDB-lite"/>
    </source>
</evidence>
<evidence type="ECO:0000305" key="5"/>
<organism>
    <name type="scientific">Dictyostelium discoideum</name>
    <name type="common">Social amoeba</name>
    <dbReference type="NCBI Taxonomy" id="44689"/>
    <lineage>
        <taxon>Eukaryota</taxon>
        <taxon>Amoebozoa</taxon>
        <taxon>Evosea</taxon>
        <taxon>Eumycetozoa</taxon>
        <taxon>Dictyostelia</taxon>
        <taxon>Dictyosteliales</taxon>
        <taxon>Dictyosteliaceae</taxon>
        <taxon>Dictyostelium</taxon>
    </lineage>
</organism>
<accession>Q54WU6</accession>
<proteinExistence type="inferred from homology"/>
<sequence>MISMGMTSKGQNVDGAPAGNSSSEWIISSSSSPFQANKRYSLDPPFGSDYSPPASPQNELDPLSSYFLNLQSEDNDVRKTAIEYIINTLSNPDNEKLIKNHLPMIVVLSTESPFDDISEAFTNFLKPIQEKYHIPKQRTTVFTSESQLPPLNTDDELTRKLFQDVFLQHGRVNHLTRILGWHPQYLEKFLLAYNTIMRDPGPLPLHWRNYIGILAAARYKCSYIIALQEHEFLMNNGDARWLQGIDHIPAKLKNLLKVIELLAHQPWLLPKLDIEYLVKGTDAWSIAELVHAMVLICTFLSLSGFVFCCGISPECGLSESNNLSSSFSLNDSDCEIEDTAATENTAKVMELLKNRRSQQQDDDDDDQLHDRQQDFHNAGDDSQSSNNNTTTTTTTTTTTTTTTNTNTTSNSAGGGDSSSSTLSQSSDRMSDFSRYIGNNTMTHTDFDVSSKLYNIFSAQEYSWREHGYELVSRYFPDAAPLLDEEFSFVYTMTYYKFNNNTDIDTLPFRRAVWYYVQRVKGMLHDDYNYQEVNMFLSRSLKNFVKKAVCFPETIKRDDYSKLGYSLKPDEKCHLSLLAVCSHKQASLLYGLYSVMNYQNRR</sequence>
<keyword id="KW-0963">Cytoplasm</keyword>
<keyword id="KW-0325">Glycoprotein</keyword>
<keyword id="KW-0539">Nucleus</keyword>
<keyword id="KW-1185">Reference proteome</keyword>
<name>SESN_DICDI</name>
<reference key="1">
    <citation type="journal article" date="2005" name="Nature">
        <title>The genome of the social amoeba Dictyostelium discoideum.</title>
        <authorList>
            <person name="Eichinger L."/>
            <person name="Pachebat J.A."/>
            <person name="Gloeckner G."/>
            <person name="Rajandream M.A."/>
            <person name="Sucgang R."/>
            <person name="Berriman M."/>
            <person name="Song J."/>
            <person name="Olsen R."/>
            <person name="Szafranski K."/>
            <person name="Xu Q."/>
            <person name="Tunggal B."/>
            <person name="Kummerfeld S."/>
            <person name="Madera M."/>
            <person name="Konfortov B.A."/>
            <person name="Rivero F."/>
            <person name="Bankier A.T."/>
            <person name="Lehmann R."/>
            <person name="Hamlin N."/>
            <person name="Davies R."/>
            <person name="Gaudet P."/>
            <person name="Fey P."/>
            <person name="Pilcher K."/>
            <person name="Chen G."/>
            <person name="Saunders D."/>
            <person name="Sodergren E.J."/>
            <person name="Davis P."/>
            <person name="Kerhornou A."/>
            <person name="Nie X."/>
            <person name="Hall N."/>
            <person name="Anjard C."/>
            <person name="Hemphill L."/>
            <person name="Bason N."/>
            <person name="Farbrother P."/>
            <person name="Desany B."/>
            <person name="Just E."/>
            <person name="Morio T."/>
            <person name="Rost R."/>
            <person name="Churcher C.M."/>
            <person name="Cooper J."/>
            <person name="Haydock S."/>
            <person name="van Driessche N."/>
            <person name="Cronin A."/>
            <person name="Goodhead I."/>
            <person name="Muzny D.M."/>
            <person name="Mourier T."/>
            <person name="Pain A."/>
            <person name="Lu M."/>
            <person name="Harper D."/>
            <person name="Lindsay R."/>
            <person name="Hauser H."/>
            <person name="James K.D."/>
            <person name="Quiles M."/>
            <person name="Madan Babu M."/>
            <person name="Saito T."/>
            <person name="Buchrieser C."/>
            <person name="Wardroper A."/>
            <person name="Felder M."/>
            <person name="Thangavelu M."/>
            <person name="Johnson D."/>
            <person name="Knights A."/>
            <person name="Loulseged H."/>
            <person name="Mungall K.L."/>
            <person name="Oliver K."/>
            <person name="Price C."/>
            <person name="Quail M.A."/>
            <person name="Urushihara H."/>
            <person name="Hernandez J."/>
            <person name="Rabbinowitsch E."/>
            <person name="Steffen D."/>
            <person name="Sanders M."/>
            <person name="Ma J."/>
            <person name="Kohara Y."/>
            <person name="Sharp S."/>
            <person name="Simmonds M.N."/>
            <person name="Spiegler S."/>
            <person name="Tivey A."/>
            <person name="Sugano S."/>
            <person name="White B."/>
            <person name="Walker D."/>
            <person name="Woodward J.R."/>
            <person name="Winckler T."/>
            <person name="Tanaka Y."/>
            <person name="Shaulsky G."/>
            <person name="Schleicher M."/>
            <person name="Weinstock G.M."/>
            <person name="Rosenthal A."/>
            <person name="Cox E.C."/>
            <person name="Chisholm R.L."/>
            <person name="Gibbs R.A."/>
            <person name="Loomis W.F."/>
            <person name="Platzer M."/>
            <person name="Kay R.R."/>
            <person name="Williams J.G."/>
            <person name="Dear P.H."/>
            <person name="Noegel A.A."/>
            <person name="Barrell B.G."/>
            <person name="Kuspa A."/>
        </authorList>
    </citation>
    <scope>NUCLEOTIDE SEQUENCE [LARGE SCALE GENOMIC DNA]</scope>
    <source>
        <strain>AX4</strain>
    </source>
</reference>
<comment type="function">
    <text evidence="1">May function as a negative feedback regulator of TOR function.</text>
</comment>
<comment type="subcellular location">
    <subcellularLocation>
        <location evidence="2">Nucleus</location>
    </subcellularLocation>
    <subcellularLocation>
        <location evidence="2">Cytoplasm</location>
    </subcellularLocation>
</comment>
<comment type="similarity">
    <text evidence="5">Belongs to the sestrin family.</text>
</comment>